<organism>
    <name type="scientific">Salmonella paratyphi A (strain ATCC 9150 / SARB42)</name>
    <dbReference type="NCBI Taxonomy" id="295319"/>
    <lineage>
        <taxon>Bacteria</taxon>
        <taxon>Pseudomonadati</taxon>
        <taxon>Pseudomonadota</taxon>
        <taxon>Gammaproteobacteria</taxon>
        <taxon>Enterobacterales</taxon>
        <taxon>Enterobacteriaceae</taxon>
        <taxon>Salmonella</taxon>
    </lineage>
</organism>
<feature type="chain" id="PRO_0000212198" description="2,3-bisphosphoglycerate-independent phosphoglycerate mutase">
    <location>
        <begin position="1"/>
        <end position="514"/>
    </location>
</feature>
<feature type="active site" description="Phosphoserine intermediate" evidence="1">
    <location>
        <position position="64"/>
    </location>
</feature>
<feature type="binding site" evidence="1">
    <location>
        <position position="14"/>
    </location>
    <ligand>
        <name>Mn(2+)</name>
        <dbReference type="ChEBI" id="CHEBI:29035"/>
        <label>2</label>
    </ligand>
</feature>
<feature type="binding site" evidence="1">
    <location>
        <position position="64"/>
    </location>
    <ligand>
        <name>Mn(2+)</name>
        <dbReference type="ChEBI" id="CHEBI:29035"/>
        <label>2</label>
    </ligand>
</feature>
<feature type="binding site" evidence="1">
    <location>
        <position position="125"/>
    </location>
    <ligand>
        <name>substrate</name>
    </ligand>
</feature>
<feature type="binding site" evidence="1">
    <location>
        <begin position="155"/>
        <end position="156"/>
    </location>
    <ligand>
        <name>substrate</name>
    </ligand>
</feature>
<feature type="binding site" evidence="1">
    <location>
        <position position="187"/>
    </location>
    <ligand>
        <name>substrate</name>
    </ligand>
</feature>
<feature type="binding site" evidence="1">
    <location>
        <position position="193"/>
    </location>
    <ligand>
        <name>substrate</name>
    </ligand>
</feature>
<feature type="binding site" evidence="1">
    <location>
        <begin position="263"/>
        <end position="266"/>
    </location>
    <ligand>
        <name>substrate</name>
    </ligand>
</feature>
<feature type="binding site" evidence="1">
    <location>
        <position position="336"/>
    </location>
    <ligand>
        <name>substrate</name>
    </ligand>
</feature>
<feature type="binding site" evidence="1">
    <location>
        <position position="403"/>
    </location>
    <ligand>
        <name>Mn(2+)</name>
        <dbReference type="ChEBI" id="CHEBI:29035"/>
        <label>1</label>
    </ligand>
</feature>
<feature type="binding site" evidence="1">
    <location>
        <position position="407"/>
    </location>
    <ligand>
        <name>Mn(2+)</name>
        <dbReference type="ChEBI" id="CHEBI:29035"/>
        <label>1</label>
    </ligand>
</feature>
<feature type="binding site" evidence="1">
    <location>
        <position position="444"/>
    </location>
    <ligand>
        <name>Mn(2+)</name>
        <dbReference type="ChEBI" id="CHEBI:29035"/>
        <label>2</label>
    </ligand>
</feature>
<feature type="binding site" evidence="1">
    <location>
        <position position="445"/>
    </location>
    <ligand>
        <name>Mn(2+)</name>
        <dbReference type="ChEBI" id="CHEBI:29035"/>
        <label>2</label>
    </ligand>
</feature>
<feature type="binding site" evidence="1">
    <location>
        <position position="463"/>
    </location>
    <ligand>
        <name>Mn(2+)</name>
        <dbReference type="ChEBI" id="CHEBI:29035"/>
        <label>1</label>
    </ligand>
</feature>
<proteinExistence type="inferred from homology"/>
<comment type="function">
    <text evidence="1">Catalyzes the interconversion of 2-phosphoglycerate and 3-phosphoglycerate.</text>
</comment>
<comment type="catalytic activity">
    <reaction evidence="1">
        <text>(2R)-2-phosphoglycerate = (2R)-3-phosphoglycerate</text>
        <dbReference type="Rhea" id="RHEA:15901"/>
        <dbReference type="ChEBI" id="CHEBI:58272"/>
        <dbReference type="ChEBI" id="CHEBI:58289"/>
        <dbReference type="EC" id="5.4.2.12"/>
    </reaction>
</comment>
<comment type="cofactor">
    <cofactor evidence="1">
        <name>Mn(2+)</name>
        <dbReference type="ChEBI" id="CHEBI:29035"/>
    </cofactor>
    <text evidence="1">Binds 2 manganese ions per subunit.</text>
</comment>
<comment type="pathway">
    <text evidence="1">Carbohydrate degradation; glycolysis; pyruvate from D-glyceraldehyde 3-phosphate: step 3/5.</text>
</comment>
<comment type="subunit">
    <text evidence="1">Monomer.</text>
</comment>
<comment type="similarity">
    <text evidence="1">Belongs to the BPG-independent phosphoglycerate mutase family.</text>
</comment>
<comment type="sequence caution" evidence="2">
    <conflict type="erroneous initiation">
        <sequence resource="EMBL-CDS" id="AAV79357"/>
    </conflict>
    <text>Truncated N-terminus.</text>
</comment>
<name>GPMI_SALPA</name>
<evidence type="ECO:0000255" key="1">
    <source>
        <dbReference type="HAMAP-Rule" id="MF_01038"/>
    </source>
</evidence>
<evidence type="ECO:0000305" key="2"/>
<sequence>MSVSKKPMVLVILDGYGYREEQQDNAILNAKTPVMDALWAKRPHTLIDASGLEVGLPDRQMGNSEVGHVNLGAGRIVYQDLTRLDVEIKERTFFANPVLTNAVDQAKNAGKAVHIMGLLSAGGVHSHEDHIMAMVELAAERGAEKIYLHAFLDGRDTPPRSAEASLKKFEDKFAALGKGRVASIVGRYYAMDRDNRWDRVEKAYDLMTLAQGEFQADTAVAGLQAAYARDENDEFVKATVIRAEGQADAAMEDGDTLIFMNFRADRAREITRAFVNADFDGFARKKVVNLNFVMLTEYAADIKTAVAYPPASLANTFGEWMAKNDKTQLRISETEKYAHVTFFFNGGVEEPFAGEERILINSPKVATYDLQPEMSSAELTEKLVAAIESGKYDTIICNYPNGDMVGHTGVMEAAIKAVEALDNCIEQVTKAVESVGGQLLITADHGNAEQMRDPATGQAHTAHTNLPVPLIYVGEKNVKAVEGGKLSDIAPTMLSLMGMEIPQEMTGKPLFIVE</sequence>
<gene>
    <name evidence="1" type="primary">gpmI</name>
    <name type="ordered locus">SPA3556</name>
</gene>
<dbReference type="EC" id="5.4.2.12" evidence="1"/>
<dbReference type="EMBL" id="CP000026">
    <property type="protein sequence ID" value="AAV79357.1"/>
    <property type="status" value="ALT_INIT"/>
    <property type="molecule type" value="Genomic_DNA"/>
</dbReference>
<dbReference type="SMR" id="Q5PBZ2"/>
<dbReference type="KEGG" id="spt:SPA3556"/>
<dbReference type="HOGENOM" id="CLU_026099_2_0_6"/>
<dbReference type="UniPathway" id="UPA00109">
    <property type="reaction ID" value="UER00186"/>
</dbReference>
<dbReference type="Proteomes" id="UP000008185">
    <property type="component" value="Chromosome"/>
</dbReference>
<dbReference type="GO" id="GO:0005829">
    <property type="term" value="C:cytosol"/>
    <property type="evidence" value="ECO:0007669"/>
    <property type="project" value="TreeGrafter"/>
</dbReference>
<dbReference type="GO" id="GO:0030145">
    <property type="term" value="F:manganese ion binding"/>
    <property type="evidence" value="ECO:0007669"/>
    <property type="project" value="UniProtKB-UniRule"/>
</dbReference>
<dbReference type="GO" id="GO:0004619">
    <property type="term" value="F:phosphoglycerate mutase activity"/>
    <property type="evidence" value="ECO:0007669"/>
    <property type="project" value="UniProtKB-EC"/>
</dbReference>
<dbReference type="GO" id="GO:0006007">
    <property type="term" value="P:glucose catabolic process"/>
    <property type="evidence" value="ECO:0007669"/>
    <property type="project" value="InterPro"/>
</dbReference>
<dbReference type="GO" id="GO:0006096">
    <property type="term" value="P:glycolytic process"/>
    <property type="evidence" value="ECO:0007669"/>
    <property type="project" value="UniProtKB-UniRule"/>
</dbReference>
<dbReference type="CDD" id="cd16010">
    <property type="entry name" value="iPGM"/>
    <property type="match status" value="1"/>
</dbReference>
<dbReference type="FunFam" id="3.40.1450.10:FF:000001">
    <property type="entry name" value="2,3-bisphosphoglycerate-independent phosphoglycerate mutase"/>
    <property type="match status" value="1"/>
</dbReference>
<dbReference type="FunFam" id="3.40.720.10:FF:000001">
    <property type="entry name" value="2,3-bisphosphoglycerate-independent phosphoglycerate mutase"/>
    <property type="match status" value="1"/>
</dbReference>
<dbReference type="Gene3D" id="3.40.720.10">
    <property type="entry name" value="Alkaline Phosphatase, subunit A"/>
    <property type="match status" value="1"/>
</dbReference>
<dbReference type="Gene3D" id="3.40.1450.10">
    <property type="entry name" value="BPG-independent phosphoglycerate mutase, domain B"/>
    <property type="match status" value="1"/>
</dbReference>
<dbReference type="HAMAP" id="MF_01038">
    <property type="entry name" value="GpmI"/>
    <property type="match status" value="1"/>
</dbReference>
<dbReference type="InterPro" id="IPR017850">
    <property type="entry name" value="Alkaline_phosphatase_core_sf"/>
</dbReference>
<dbReference type="InterPro" id="IPR011258">
    <property type="entry name" value="BPG-indep_PGM_N"/>
</dbReference>
<dbReference type="InterPro" id="IPR006124">
    <property type="entry name" value="Metalloenzyme"/>
</dbReference>
<dbReference type="InterPro" id="IPR036646">
    <property type="entry name" value="PGAM_B_sf"/>
</dbReference>
<dbReference type="InterPro" id="IPR005995">
    <property type="entry name" value="Pgm_bpd_ind"/>
</dbReference>
<dbReference type="NCBIfam" id="TIGR01307">
    <property type="entry name" value="pgm_bpd_ind"/>
    <property type="match status" value="1"/>
</dbReference>
<dbReference type="NCBIfam" id="NF003897">
    <property type="entry name" value="PRK05434.1-5"/>
    <property type="match status" value="1"/>
</dbReference>
<dbReference type="PANTHER" id="PTHR31637">
    <property type="entry name" value="2,3-BISPHOSPHOGLYCERATE-INDEPENDENT PHOSPHOGLYCERATE MUTASE"/>
    <property type="match status" value="1"/>
</dbReference>
<dbReference type="PANTHER" id="PTHR31637:SF0">
    <property type="entry name" value="2,3-BISPHOSPHOGLYCERATE-INDEPENDENT PHOSPHOGLYCERATE MUTASE"/>
    <property type="match status" value="1"/>
</dbReference>
<dbReference type="Pfam" id="PF06415">
    <property type="entry name" value="iPGM_N"/>
    <property type="match status" value="1"/>
</dbReference>
<dbReference type="Pfam" id="PF01676">
    <property type="entry name" value="Metalloenzyme"/>
    <property type="match status" value="1"/>
</dbReference>
<dbReference type="PIRSF" id="PIRSF001492">
    <property type="entry name" value="IPGAM"/>
    <property type="match status" value="1"/>
</dbReference>
<dbReference type="SUPFAM" id="SSF64158">
    <property type="entry name" value="2,3-Bisphosphoglycerate-independent phosphoglycerate mutase, substrate-binding domain"/>
    <property type="match status" value="1"/>
</dbReference>
<dbReference type="SUPFAM" id="SSF53649">
    <property type="entry name" value="Alkaline phosphatase-like"/>
    <property type="match status" value="1"/>
</dbReference>
<protein>
    <recommendedName>
        <fullName evidence="1">2,3-bisphosphoglycerate-independent phosphoglycerate mutase</fullName>
        <shortName evidence="1">BPG-independent PGAM</shortName>
        <shortName evidence="1">Phosphoglyceromutase</shortName>
        <shortName evidence="1">iPGM</shortName>
        <ecNumber evidence="1">5.4.2.12</ecNumber>
    </recommendedName>
</protein>
<accession>Q5PBZ2</accession>
<keyword id="KW-0324">Glycolysis</keyword>
<keyword id="KW-0413">Isomerase</keyword>
<keyword id="KW-0464">Manganese</keyword>
<keyword id="KW-0479">Metal-binding</keyword>
<reference key="1">
    <citation type="journal article" date="2004" name="Nat. Genet.">
        <title>Comparison of genome degradation in Paratyphi A and Typhi, human-restricted serovars of Salmonella enterica that cause typhoid.</title>
        <authorList>
            <person name="McClelland M."/>
            <person name="Sanderson K.E."/>
            <person name="Clifton S.W."/>
            <person name="Latreille P."/>
            <person name="Porwollik S."/>
            <person name="Sabo A."/>
            <person name="Meyer R."/>
            <person name="Bieri T."/>
            <person name="Ozersky P."/>
            <person name="McLellan M."/>
            <person name="Harkins C.R."/>
            <person name="Wang C."/>
            <person name="Nguyen C."/>
            <person name="Berghoff A."/>
            <person name="Elliott G."/>
            <person name="Kohlberg S."/>
            <person name="Strong C."/>
            <person name="Du F."/>
            <person name="Carter J."/>
            <person name="Kremizki C."/>
            <person name="Layman D."/>
            <person name="Leonard S."/>
            <person name="Sun H."/>
            <person name="Fulton L."/>
            <person name="Nash W."/>
            <person name="Miner T."/>
            <person name="Minx P."/>
            <person name="Delehaunty K."/>
            <person name="Fronick C."/>
            <person name="Magrini V."/>
            <person name="Nhan M."/>
            <person name="Warren W."/>
            <person name="Florea L."/>
            <person name="Spieth J."/>
            <person name="Wilson R.K."/>
        </authorList>
    </citation>
    <scope>NUCLEOTIDE SEQUENCE [LARGE SCALE GENOMIC DNA]</scope>
    <source>
        <strain>ATCC 9150 / SARB42</strain>
    </source>
</reference>